<accession>C3LE93</accession>
<proteinExistence type="inferred from homology"/>
<feature type="chain" id="PRO_1000118006" description="N-acetylmuramic acid 6-phosphate etherase">
    <location>
        <begin position="1"/>
        <end position="294"/>
    </location>
</feature>
<feature type="domain" description="SIS" evidence="1">
    <location>
        <begin position="54"/>
        <end position="217"/>
    </location>
</feature>
<feature type="active site" description="Proton donor" evidence="1">
    <location>
        <position position="82"/>
    </location>
</feature>
<feature type="active site" evidence="1">
    <location>
        <position position="113"/>
    </location>
</feature>
<protein>
    <recommendedName>
        <fullName evidence="1">N-acetylmuramic acid 6-phosphate etherase</fullName>
        <shortName evidence="1">MurNAc-6-P etherase</shortName>
        <ecNumber evidence="1">4.2.1.126</ecNumber>
    </recommendedName>
    <alternativeName>
        <fullName evidence="1">N-acetylmuramic acid 6-phosphate hydrolase</fullName>
    </alternativeName>
    <alternativeName>
        <fullName evidence="1">N-acetylmuramic acid 6-phosphate lyase</fullName>
    </alternativeName>
</protein>
<keyword id="KW-0119">Carbohydrate metabolism</keyword>
<keyword id="KW-0456">Lyase</keyword>
<dbReference type="EC" id="4.2.1.126" evidence="1"/>
<dbReference type="EMBL" id="CP001215">
    <property type="protein sequence ID" value="ACP15917.1"/>
    <property type="molecule type" value="Genomic_DNA"/>
</dbReference>
<dbReference type="RefSeq" id="WP_000892332.1">
    <property type="nucleotide sequence ID" value="NC_012581.1"/>
</dbReference>
<dbReference type="SMR" id="C3LE93"/>
<dbReference type="GeneID" id="45020894"/>
<dbReference type="KEGG" id="bah:BAMEG_3734"/>
<dbReference type="HOGENOM" id="CLU_049049_1_1_9"/>
<dbReference type="UniPathway" id="UPA00342"/>
<dbReference type="GO" id="GO:0097367">
    <property type="term" value="F:carbohydrate derivative binding"/>
    <property type="evidence" value="ECO:0007669"/>
    <property type="project" value="InterPro"/>
</dbReference>
<dbReference type="GO" id="GO:0016835">
    <property type="term" value="F:carbon-oxygen lyase activity"/>
    <property type="evidence" value="ECO:0007669"/>
    <property type="project" value="UniProtKB-UniRule"/>
</dbReference>
<dbReference type="GO" id="GO:0016803">
    <property type="term" value="F:ether hydrolase activity"/>
    <property type="evidence" value="ECO:0007669"/>
    <property type="project" value="TreeGrafter"/>
</dbReference>
<dbReference type="GO" id="GO:0046348">
    <property type="term" value="P:amino sugar catabolic process"/>
    <property type="evidence" value="ECO:0007669"/>
    <property type="project" value="InterPro"/>
</dbReference>
<dbReference type="GO" id="GO:0097173">
    <property type="term" value="P:N-acetylmuramic acid catabolic process"/>
    <property type="evidence" value="ECO:0007669"/>
    <property type="project" value="UniProtKB-UniPathway"/>
</dbReference>
<dbReference type="GO" id="GO:0009254">
    <property type="term" value="P:peptidoglycan turnover"/>
    <property type="evidence" value="ECO:0007669"/>
    <property type="project" value="TreeGrafter"/>
</dbReference>
<dbReference type="CDD" id="cd05007">
    <property type="entry name" value="SIS_Etherase"/>
    <property type="match status" value="1"/>
</dbReference>
<dbReference type="FunFam" id="1.10.8.1080:FF:000001">
    <property type="entry name" value="N-acetylmuramic acid 6-phosphate etherase"/>
    <property type="match status" value="1"/>
</dbReference>
<dbReference type="FunFam" id="3.40.50.10490:FF:000014">
    <property type="entry name" value="N-acetylmuramic acid 6-phosphate etherase"/>
    <property type="match status" value="1"/>
</dbReference>
<dbReference type="Gene3D" id="1.10.8.1080">
    <property type="match status" value="1"/>
</dbReference>
<dbReference type="Gene3D" id="3.40.50.10490">
    <property type="entry name" value="Glucose-6-phosphate isomerase like protein, domain 1"/>
    <property type="match status" value="1"/>
</dbReference>
<dbReference type="HAMAP" id="MF_00068">
    <property type="entry name" value="MurQ"/>
    <property type="match status" value="1"/>
</dbReference>
<dbReference type="InterPro" id="IPR005488">
    <property type="entry name" value="Etherase_MurQ"/>
</dbReference>
<dbReference type="InterPro" id="IPR005486">
    <property type="entry name" value="Glucokinase_regulatory_CS"/>
</dbReference>
<dbReference type="InterPro" id="IPR040190">
    <property type="entry name" value="MURQ/GCKR"/>
</dbReference>
<dbReference type="InterPro" id="IPR001347">
    <property type="entry name" value="SIS_dom"/>
</dbReference>
<dbReference type="InterPro" id="IPR046348">
    <property type="entry name" value="SIS_dom_sf"/>
</dbReference>
<dbReference type="NCBIfam" id="TIGR00274">
    <property type="entry name" value="N-acetylmuramic acid 6-phosphate etherase"/>
    <property type="match status" value="1"/>
</dbReference>
<dbReference type="NCBIfam" id="NF003915">
    <property type="entry name" value="PRK05441.1"/>
    <property type="match status" value="1"/>
</dbReference>
<dbReference type="NCBIfam" id="NF009222">
    <property type="entry name" value="PRK12570.1"/>
    <property type="match status" value="1"/>
</dbReference>
<dbReference type="PANTHER" id="PTHR10088">
    <property type="entry name" value="GLUCOKINASE REGULATORY PROTEIN"/>
    <property type="match status" value="1"/>
</dbReference>
<dbReference type="PANTHER" id="PTHR10088:SF4">
    <property type="entry name" value="GLUCOKINASE REGULATORY PROTEIN"/>
    <property type="match status" value="1"/>
</dbReference>
<dbReference type="Pfam" id="PF22645">
    <property type="entry name" value="GKRP_SIS_N"/>
    <property type="match status" value="1"/>
</dbReference>
<dbReference type="SUPFAM" id="SSF53697">
    <property type="entry name" value="SIS domain"/>
    <property type="match status" value="1"/>
</dbReference>
<dbReference type="PROSITE" id="PS01272">
    <property type="entry name" value="GCKR"/>
    <property type="match status" value="1"/>
</dbReference>
<dbReference type="PROSITE" id="PS51464">
    <property type="entry name" value="SIS"/>
    <property type="match status" value="1"/>
</dbReference>
<name>MURQ_BACAC</name>
<organism>
    <name type="scientific">Bacillus anthracis (strain CDC 684 / NRRL 3495)</name>
    <dbReference type="NCBI Taxonomy" id="568206"/>
    <lineage>
        <taxon>Bacteria</taxon>
        <taxon>Bacillati</taxon>
        <taxon>Bacillota</taxon>
        <taxon>Bacilli</taxon>
        <taxon>Bacillales</taxon>
        <taxon>Bacillaceae</taxon>
        <taxon>Bacillus</taxon>
        <taxon>Bacillus cereus group</taxon>
    </lineage>
</organism>
<evidence type="ECO:0000255" key="1">
    <source>
        <dbReference type="HAMAP-Rule" id="MF_00068"/>
    </source>
</evidence>
<sequence length="294" mass="31979">MLENLSTEHRNEKTMNLDEMNIKEVLQSMNEEDRTVALAVEKEIEHIEKVVRVVIQSFEEEGRLIYIGAGTSGRLGILDAVECPPTFGTDDKMVQGFIAGGLKAFTKAVEGAEDREELAEEDLKSIGLNEKDTVIGIAASGRTPYVIGGLKYANSVGASTASISCNKNAEISKYAKLNVEVETGAEILTGSTRLKAGTAQKLVLNMISTASMIGVGKVYKNLMVDVQSTNEKLVERSKRIIVEATGVSYEVAAEHYEKAERNVKAAIVMVLLQCEYGEALEKLKQAKGFVKKAL</sequence>
<reference key="1">
    <citation type="submission" date="2008-10" db="EMBL/GenBank/DDBJ databases">
        <title>Genome sequence of Bacillus anthracis str. CDC 684.</title>
        <authorList>
            <person name="Dodson R.J."/>
            <person name="Munk A.C."/>
            <person name="Brettin T."/>
            <person name="Bruce D."/>
            <person name="Detter C."/>
            <person name="Tapia R."/>
            <person name="Han C."/>
            <person name="Sutton G."/>
            <person name="Sims D."/>
        </authorList>
    </citation>
    <scope>NUCLEOTIDE SEQUENCE [LARGE SCALE GENOMIC DNA]</scope>
    <source>
        <strain>CDC 684 / NRRL 3495</strain>
    </source>
</reference>
<gene>
    <name evidence="1" type="primary">murQ</name>
    <name type="ordered locus">BAMEG_3734</name>
</gene>
<comment type="function">
    <text evidence="1">Specifically catalyzes the cleavage of the D-lactyl ether substituent of MurNAc 6-phosphate, producing GlcNAc 6-phosphate and D-lactate.</text>
</comment>
<comment type="catalytic activity">
    <reaction evidence="1">
        <text>N-acetyl-D-muramate 6-phosphate + H2O = N-acetyl-D-glucosamine 6-phosphate + (R)-lactate</text>
        <dbReference type="Rhea" id="RHEA:26410"/>
        <dbReference type="ChEBI" id="CHEBI:15377"/>
        <dbReference type="ChEBI" id="CHEBI:16004"/>
        <dbReference type="ChEBI" id="CHEBI:57513"/>
        <dbReference type="ChEBI" id="CHEBI:58722"/>
        <dbReference type="EC" id="4.2.1.126"/>
    </reaction>
</comment>
<comment type="pathway">
    <text evidence="1">Amino-sugar metabolism; N-acetylmuramate degradation.</text>
</comment>
<comment type="subunit">
    <text evidence="1">Homodimer.</text>
</comment>
<comment type="miscellaneous">
    <text evidence="1">A lyase-type mechanism (elimination/hydration) is suggested for the cleavage of the lactyl ether bond of MurNAc 6-phosphate, with the formation of an alpha,beta-unsaturated aldehyde intermediate with (E)-stereochemistry, followed by the syn addition of water to give product.</text>
</comment>
<comment type="similarity">
    <text evidence="1">Belongs to the GCKR-like family. MurNAc-6-P etherase subfamily.</text>
</comment>